<comment type="function">
    <text evidence="4 5 8">Antimicrobial peptide with activity against Gram-positive and Gram-negative bacteria and fungi (PubMed:31422479, PubMed:31671555). Has been tested against E.coli (MIC=2.68-8 uM), S.aureus (ATCC 25923, MIC=2.68-8 uM), S.aureus (ATCC oxacillin resistant, MIC=2.68 uM), K.pneumoniae (MIC=10.71 uM) and C.albicans (MIC=10.71-32 uM) (PubMed:31422479, PubMed:31671555). Probably acts by disturbing membrane functions with its alpha-helical amphipathic structure (Probable). May penetrate bacterial membranes, but stay at the mammalian membrane surface (Probable). Shows a very weak hemolytic activity (PubMed:31671555).</text>
</comment>
<comment type="subcellular location">
    <subcellularLocation>
        <location evidence="4 5">Secreted</location>
    </subcellularLocation>
    <subcellularLocation>
        <location evidence="1">Target cell membrane</location>
    </subcellularLocation>
</comment>
<comment type="tissue specificity">
    <text evidence="9">Expressed by the skin glands.</text>
</comment>
<comment type="mass spectrometry"/>
<comment type="similarity">
    <text evidence="7">Belongs to the frog skin active peptide (FSAP) family. Dermaseptin subfamily.</text>
</comment>
<feature type="signal peptide" evidence="2">
    <location>
        <begin position="1"/>
        <end position="22"/>
    </location>
</feature>
<feature type="propeptide" id="PRO_0000449983" evidence="9">
    <location>
        <begin position="23"/>
        <end position="45"/>
    </location>
</feature>
<feature type="peptide" id="PRO_0000449984" description="Dermaseptin-SP2" evidence="5">
    <location>
        <begin position="46"/>
        <end position="73"/>
    </location>
</feature>
<feature type="propeptide" id="PRO_0000449985" evidence="9">
    <location>
        <begin position="74"/>
        <end position="76"/>
    </location>
</feature>
<feature type="region of interest" description="Disordered" evidence="3">
    <location>
        <begin position="24"/>
        <end position="44"/>
    </location>
</feature>
<feature type="compositionally biased region" description="Acidic residues" evidence="3">
    <location>
        <begin position="30"/>
        <end position="41"/>
    </location>
</feature>
<feature type="modified residue" description="Glutamine amide" evidence="5">
    <location>
        <position position="73"/>
    </location>
</feature>
<sequence>MAFLKKSLFLVLFLGLVSLSICEEEKRENEDEEEQEDEEQSEEKRASWKVFLKNIGKAAGKAVLNSVTDMVNQGEQ</sequence>
<dbReference type="EMBL" id="MK532480">
    <property type="protein sequence ID" value="QFU19630.1"/>
    <property type="molecule type" value="mRNA"/>
</dbReference>
<dbReference type="GO" id="GO:0005576">
    <property type="term" value="C:extracellular region"/>
    <property type="evidence" value="ECO:0007669"/>
    <property type="project" value="UniProtKB-SubCell"/>
</dbReference>
<dbReference type="GO" id="GO:0016020">
    <property type="term" value="C:membrane"/>
    <property type="evidence" value="ECO:0007669"/>
    <property type="project" value="UniProtKB-KW"/>
</dbReference>
<dbReference type="GO" id="GO:0044218">
    <property type="term" value="C:other organism cell membrane"/>
    <property type="evidence" value="ECO:0007669"/>
    <property type="project" value="UniProtKB-KW"/>
</dbReference>
<dbReference type="GO" id="GO:0042742">
    <property type="term" value="P:defense response to bacterium"/>
    <property type="evidence" value="ECO:0007669"/>
    <property type="project" value="UniProtKB-KW"/>
</dbReference>
<dbReference type="GO" id="GO:0050832">
    <property type="term" value="P:defense response to fungus"/>
    <property type="evidence" value="ECO:0007669"/>
    <property type="project" value="UniProtKB-KW"/>
</dbReference>
<dbReference type="GO" id="GO:0045087">
    <property type="term" value="P:innate immune response"/>
    <property type="evidence" value="ECO:0007669"/>
    <property type="project" value="UniProtKB-KW"/>
</dbReference>
<dbReference type="GO" id="GO:0031640">
    <property type="term" value="P:killing of cells of another organism"/>
    <property type="evidence" value="ECO:0007669"/>
    <property type="project" value="UniProtKB-KW"/>
</dbReference>
<dbReference type="InterPro" id="IPR022731">
    <property type="entry name" value="Dermaseptin_dom"/>
</dbReference>
<dbReference type="InterPro" id="IPR004275">
    <property type="entry name" value="Frog_antimicrobial_propeptide"/>
</dbReference>
<dbReference type="InterPro" id="IPR016322">
    <property type="entry name" value="FSAP"/>
</dbReference>
<dbReference type="Pfam" id="PF12121">
    <property type="entry name" value="DD_K"/>
    <property type="match status" value="1"/>
</dbReference>
<dbReference type="Pfam" id="PF03032">
    <property type="entry name" value="FSAP_sig_propep"/>
    <property type="match status" value="1"/>
</dbReference>
<dbReference type="PIRSF" id="PIRSF001822">
    <property type="entry name" value="Dermaseptin_precursor"/>
    <property type="match status" value="1"/>
</dbReference>
<accession>A0A5P9K470</accession>
<protein>
    <recommendedName>
        <fullName evidence="6">Dermaseptin-SP2</fullName>
        <shortName evidence="6">DRS-SP2</shortName>
    </recommendedName>
</protein>
<name>DRS2_AGASP</name>
<evidence type="ECO:0000250" key="1">
    <source>
        <dbReference type="UniProtKB" id="P31107"/>
    </source>
</evidence>
<evidence type="ECO:0000255" key="2"/>
<evidence type="ECO:0000256" key="3">
    <source>
        <dbReference type="SAM" id="MobiDB-lite"/>
    </source>
</evidence>
<evidence type="ECO:0000269" key="4">
    <source>
    </source>
</evidence>
<evidence type="ECO:0000269" key="5">
    <source>
    </source>
</evidence>
<evidence type="ECO:0000303" key="6">
    <source>
    </source>
</evidence>
<evidence type="ECO:0000305" key="7"/>
<evidence type="ECO:0000305" key="8">
    <source>
    </source>
</evidence>
<evidence type="ECO:0000305" key="9">
    <source>
    </source>
</evidence>
<keyword id="KW-0027">Amidation</keyword>
<keyword id="KW-0878">Amphibian defense peptide</keyword>
<keyword id="KW-0044">Antibiotic</keyword>
<keyword id="KW-0929">Antimicrobial</keyword>
<keyword id="KW-0165">Cleavage on pair of basic residues</keyword>
<keyword id="KW-0204">Cytolysis</keyword>
<keyword id="KW-0295">Fungicide</keyword>
<keyword id="KW-0354">Hemolysis</keyword>
<keyword id="KW-0391">Immunity</keyword>
<keyword id="KW-0399">Innate immunity</keyword>
<keyword id="KW-0472">Membrane</keyword>
<keyword id="KW-0964">Secreted</keyword>
<keyword id="KW-0732">Signal</keyword>
<keyword id="KW-1052">Target cell membrane</keyword>
<keyword id="KW-1053">Target membrane</keyword>
<proteinExistence type="evidence at protein level"/>
<organism>
    <name type="scientific">Agalychnis spurrelli</name>
    <name type="common">Gliding leaf frog</name>
    <name type="synonym">Agalychnis litodryas</name>
    <dbReference type="NCBI Taxonomy" id="317303"/>
    <lineage>
        <taxon>Eukaryota</taxon>
        <taxon>Metazoa</taxon>
        <taxon>Chordata</taxon>
        <taxon>Craniata</taxon>
        <taxon>Vertebrata</taxon>
        <taxon>Euteleostomi</taxon>
        <taxon>Amphibia</taxon>
        <taxon>Batrachia</taxon>
        <taxon>Anura</taxon>
        <taxon>Neobatrachia</taxon>
        <taxon>Hyloidea</taxon>
        <taxon>Hylidae</taxon>
        <taxon>Phyllomedusinae</taxon>
        <taxon>Agalychnis</taxon>
    </lineage>
</organism>
<reference key="1">
    <citation type="journal article" date="2019" name="Biomolecules">
        <title>Unravelling the skin secretion peptides of the gliding leaf frog, Agalychnis spurrelli (Hylidae).</title>
        <authorList>
            <person name="Proano-Bolanos C."/>
            <person name="Blasco-Zuniga A."/>
            <person name="Almeida J.R."/>
            <person name="Wang L."/>
            <person name="Llumiquinga M.A."/>
            <person name="Rivera M."/>
            <person name="Zhou M."/>
            <person name="Chen T."/>
            <person name="Shaw C."/>
        </authorList>
    </citation>
    <scope>NUCLEOTIDE SEQUENCE [MRNA]</scope>
    <scope>FUNCTION</scope>
    <scope>MASS SPECTROMETRY</scope>
    <scope>SYNTHESIS OF 46-73</scope>
    <scope>SUBCELLULAR LOCATION</scope>
    <scope>AMIDATION AT GLN-73</scope>
    <source>
        <tissue>Skin secretion</tissue>
    </source>
</reference>
<reference key="2">
    <citation type="journal article" date="2019" name="J. Mol. Model.">
        <title>Molecular modeling of four dermaseptin-related peptides of the gliding tree frog Agalychnis spurrelli.</title>
        <authorList>
            <person name="Cuesta S."/>
            <person name="Gallegos F."/>
            <person name="Arias J."/>
            <person name="Pilaquinga F."/>
            <person name="Blasco-Zuniga A."/>
            <person name="Proano-Bolanos C."/>
            <person name="Rivera M."/>
            <person name="Meneses L."/>
        </authorList>
    </citation>
    <scope>NUCLEOTIDE SEQUENCE [MRNA]</scope>
    <scope>FUNCTION</scope>
    <scope>SYNTHESIS OF 46-73</scope>
    <scope>IDENTIFICATION BY MASS SPECTROMETRY</scope>
    <scope>SUBCELLULAR LOCATION</scope>
    <scope>3D-STRUCTURE MODELING</scope>
    <source>
        <tissue>Skin secretion</tissue>
    </source>
</reference>